<name>LSPA_DEHM1</name>
<dbReference type="EC" id="3.4.23.36" evidence="1"/>
<dbReference type="EMBL" id="CP000027">
    <property type="protein sequence ID" value="AAW39366.1"/>
    <property type="molecule type" value="Genomic_DNA"/>
</dbReference>
<dbReference type="RefSeq" id="WP_010937062.1">
    <property type="nucleotide sequence ID" value="NC_002936.3"/>
</dbReference>
<dbReference type="SMR" id="Q3Z6R4"/>
<dbReference type="FunCoup" id="Q3Z6R4">
    <property type="interactions" value="258"/>
</dbReference>
<dbReference type="STRING" id="243164.DET1374"/>
<dbReference type="GeneID" id="3229325"/>
<dbReference type="KEGG" id="det:DET1374"/>
<dbReference type="PATRIC" id="fig|243164.10.peg.1302"/>
<dbReference type="eggNOG" id="COG0597">
    <property type="taxonomic scope" value="Bacteria"/>
</dbReference>
<dbReference type="HOGENOM" id="CLU_083252_4_0_0"/>
<dbReference type="InParanoid" id="Q3Z6R4"/>
<dbReference type="UniPathway" id="UPA00665"/>
<dbReference type="Proteomes" id="UP000008289">
    <property type="component" value="Chromosome"/>
</dbReference>
<dbReference type="GO" id="GO:0005886">
    <property type="term" value="C:plasma membrane"/>
    <property type="evidence" value="ECO:0007669"/>
    <property type="project" value="UniProtKB-SubCell"/>
</dbReference>
<dbReference type="GO" id="GO:0004190">
    <property type="term" value="F:aspartic-type endopeptidase activity"/>
    <property type="evidence" value="ECO:0007669"/>
    <property type="project" value="UniProtKB-UniRule"/>
</dbReference>
<dbReference type="GO" id="GO:0006508">
    <property type="term" value="P:proteolysis"/>
    <property type="evidence" value="ECO:0007669"/>
    <property type="project" value="UniProtKB-KW"/>
</dbReference>
<dbReference type="HAMAP" id="MF_00161">
    <property type="entry name" value="LspA"/>
    <property type="match status" value="1"/>
</dbReference>
<dbReference type="InterPro" id="IPR001872">
    <property type="entry name" value="Peptidase_A8"/>
</dbReference>
<dbReference type="NCBIfam" id="TIGR00077">
    <property type="entry name" value="lspA"/>
    <property type="match status" value="1"/>
</dbReference>
<dbReference type="NCBIfam" id="NF011365">
    <property type="entry name" value="PRK14784.1"/>
    <property type="match status" value="1"/>
</dbReference>
<dbReference type="PANTHER" id="PTHR33695">
    <property type="entry name" value="LIPOPROTEIN SIGNAL PEPTIDASE"/>
    <property type="match status" value="1"/>
</dbReference>
<dbReference type="PANTHER" id="PTHR33695:SF1">
    <property type="entry name" value="LIPOPROTEIN SIGNAL PEPTIDASE"/>
    <property type="match status" value="1"/>
</dbReference>
<dbReference type="Pfam" id="PF01252">
    <property type="entry name" value="Peptidase_A8"/>
    <property type="match status" value="1"/>
</dbReference>
<dbReference type="PRINTS" id="PR00781">
    <property type="entry name" value="LIPOSIGPTASE"/>
</dbReference>
<dbReference type="PROSITE" id="PS00855">
    <property type="entry name" value="SPASE_II"/>
    <property type="match status" value="1"/>
</dbReference>
<protein>
    <recommendedName>
        <fullName evidence="1">Lipoprotein signal peptidase</fullName>
        <ecNumber evidence="1">3.4.23.36</ecNumber>
    </recommendedName>
    <alternativeName>
        <fullName evidence="1">Prolipoprotein signal peptidase</fullName>
    </alternativeName>
    <alternativeName>
        <fullName evidence="1">Signal peptidase II</fullName>
        <shortName evidence="1">SPase II</shortName>
    </alternativeName>
</protein>
<gene>
    <name evidence="1" type="primary">lspA</name>
    <name type="ordered locus">DET1374</name>
</gene>
<accession>Q3Z6R4</accession>
<reference key="1">
    <citation type="journal article" date="2005" name="Science">
        <title>Genome sequence of the PCE-dechlorinating bacterium Dehalococcoides ethenogenes.</title>
        <authorList>
            <person name="Seshadri R."/>
            <person name="Adrian L."/>
            <person name="Fouts D.E."/>
            <person name="Eisen J.A."/>
            <person name="Phillippy A.M."/>
            <person name="Methe B.A."/>
            <person name="Ward N.L."/>
            <person name="Nelson W.C."/>
            <person name="DeBoy R.T."/>
            <person name="Khouri H.M."/>
            <person name="Kolonay J.F."/>
            <person name="Dodson R.J."/>
            <person name="Daugherty S.C."/>
            <person name="Brinkac L.M."/>
            <person name="Sullivan S.A."/>
            <person name="Madupu R."/>
            <person name="Nelson K.E."/>
            <person name="Kang K.H."/>
            <person name="Impraim M."/>
            <person name="Tran K."/>
            <person name="Robinson J.M."/>
            <person name="Forberger H.A."/>
            <person name="Fraser C.M."/>
            <person name="Zinder S.H."/>
            <person name="Heidelberg J.F."/>
        </authorList>
    </citation>
    <scope>NUCLEOTIDE SEQUENCE [LARGE SCALE GENOMIC DNA]</scope>
    <source>
        <strain>ATCC BAA-2266 / KCTC 15142 / 195</strain>
    </source>
</reference>
<keyword id="KW-0064">Aspartyl protease</keyword>
<keyword id="KW-1003">Cell membrane</keyword>
<keyword id="KW-0378">Hydrolase</keyword>
<keyword id="KW-0472">Membrane</keyword>
<keyword id="KW-0645">Protease</keyword>
<keyword id="KW-0812">Transmembrane</keyword>
<keyword id="KW-1133">Transmembrane helix</keyword>
<comment type="function">
    <text evidence="1">This protein specifically catalyzes the removal of signal peptides from prolipoproteins.</text>
</comment>
<comment type="catalytic activity">
    <reaction evidence="1">
        <text>Release of signal peptides from bacterial membrane prolipoproteins. Hydrolyzes -Xaa-Yaa-Zaa-|-(S,diacylglyceryl)Cys-, in which Xaa is hydrophobic (preferably Leu), and Yaa (Ala or Ser) and Zaa (Gly or Ala) have small, neutral side chains.</text>
        <dbReference type="EC" id="3.4.23.36"/>
    </reaction>
</comment>
<comment type="pathway">
    <text evidence="1">Protein modification; lipoprotein biosynthesis (signal peptide cleavage).</text>
</comment>
<comment type="subcellular location">
    <subcellularLocation>
        <location evidence="1">Cell membrane</location>
        <topology evidence="1">Multi-pass membrane protein</topology>
    </subcellularLocation>
</comment>
<comment type="similarity">
    <text evidence="1">Belongs to the peptidase A8 family.</text>
</comment>
<evidence type="ECO:0000255" key="1">
    <source>
        <dbReference type="HAMAP-Rule" id="MF_00161"/>
    </source>
</evidence>
<feature type="chain" id="PRO_1000058232" description="Lipoprotein signal peptidase">
    <location>
        <begin position="1"/>
        <end position="160"/>
    </location>
</feature>
<feature type="transmembrane region" description="Helical" evidence="1">
    <location>
        <begin position="60"/>
        <end position="80"/>
    </location>
</feature>
<feature type="transmembrane region" description="Helical" evidence="1">
    <location>
        <begin position="84"/>
        <end position="104"/>
    </location>
</feature>
<feature type="transmembrane region" description="Helical" evidence="1">
    <location>
        <begin position="127"/>
        <end position="147"/>
    </location>
</feature>
<feature type="active site" evidence="1">
    <location>
        <position position="118"/>
    </location>
</feature>
<feature type="active site" evidence="1">
    <location>
        <position position="132"/>
    </location>
</feature>
<organism>
    <name type="scientific">Dehalococcoides mccartyi (strain ATCC BAA-2266 / KCTC 15142 / 195)</name>
    <name type="common">Dehalococcoides ethenogenes (strain 195)</name>
    <dbReference type="NCBI Taxonomy" id="243164"/>
    <lineage>
        <taxon>Bacteria</taxon>
        <taxon>Bacillati</taxon>
        <taxon>Chloroflexota</taxon>
        <taxon>Dehalococcoidia</taxon>
        <taxon>Dehalococcoidales</taxon>
        <taxon>Dehalococcoidaceae</taxon>
        <taxon>Dehalococcoides</taxon>
    </lineage>
</organism>
<sequence length="160" mass="17032">MTRGLVFFVSAACGVLADQLSKFIIAANLTPGTAIPESGFFQIVHVHNTGAAFSIFRGHTEWLIAASCLGVILALTAFFLRKKLPFLDTRPGVAALGIILAGTIGNLIDRVRLGYVTDFIQVGNFPTFNMADSCLTLGIIWLVLLYLTSSHSGGDASENA</sequence>
<proteinExistence type="inferred from homology"/>